<accession>A7N1E2</accession>
<name>TUSA_VIBC1</name>
<feature type="chain" id="PRO_1000050033" description="Sulfur carrier protein TusA">
    <location>
        <begin position="1"/>
        <end position="82"/>
    </location>
</feature>
<feature type="active site" description="Cysteine persulfide intermediate" evidence="1">
    <location>
        <position position="19"/>
    </location>
</feature>
<organism>
    <name type="scientific">Vibrio campbellii (strain ATCC BAA-1116)</name>
    <dbReference type="NCBI Taxonomy" id="2902295"/>
    <lineage>
        <taxon>Bacteria</taxon>
        <taxon>Pseudomonadati</taxon>
        <taxon>Pseudomonadota</taxon>
        <taxon>Gammaproteobacteria</taxon>
        <taxon>Vibrionales</taxon>
        <taxon>Vibrionaceae</taxon>
        <taxon>Vibrio</taxon>
    </lineage>
</organism>
<reference key="1">
    <citation type="submission" date="2007-08" db="EMBL/GenBank/DDBJ databases">
        <authorList>
            <consortium name="The Vibrio harveyi Genome Sequencing Project"/>
            <person name="Bassler B."/>
            <person name="Clifton S.W."/>
            <person name="Fulton L."/>
            <person name="Delehaunty K."/>
            <person name="Fronick C."/>
            <person name="Harrison M."/>
            <person name="Markivic C."/>
            <person name="Fulton R."/>
            <person name="Tin-Wollam A.-M."/>
            <person name="Shah N."/>
            <person name="Pepin K."/>
            <person name="Nash W."/>
            <person name="Thiruvilangam P."/>
            <person name="Bhonagiri V."/>
            <person name="Waters C."/>
            <person name="Tu K.C."/>
            <person name="Irgon J."/>
            <person name="Wilson R.K."/>
        </authorList>
    </citation>
    <scope>NUCLEOTIDE SEQUENCE [LARGE SCALE GENOMIC DNA]</scope>
    <source>
        <strain>ATCC BAA-1116 / BB120</strain>
    </source>
</reference>
<protein>
    <recommendedName>
        <fullName evidence="1">Sulfur carrier protein TusA</fullName>
    </recommendedName>
</protein>
<sequence>MSFNPELATKTLEAEGLRCPEPVMMVRKTIRNMQDGEVLLVKADDPSTTRDIPSFCRFMDHQLIAAQTDQLPYQYLIKKGLE</sequence>
<dbReference type="EMBL" id="CP000789">
    <property type="protein sequence ID" value="ABU69468.1"/>
    <property type="molecule type" value="Genomic_DNA"/>
</dbReference>
<dbReference type="RefSeq" id="WP_005532872.1">
    <property type="nucleotide sequence ID" value="NC_009783.1"/>
</dbReference>
<dbReference type="SMR" id="A7N1E2"/>
<dbReference type="KEGG" id="vha:VIBHAR_00453"/>
<dbReference type="PATRIC" id="fig|338187.25.peg.2135"/>
<dbReference type="Proteomes" id="UP000008152">
    <property type="component" value="Chromosome I"/>
</dbReference>
<dbReference type="GO" id="GO:0005737">
    <property type="term" value="C:cytoplasm"/>
    <property type="evidence" value="ECO:0007669"/>
    <property type="project" value="UniProtKB-SubCell"/>
</dbReference>
<dbReference type="GO" id="GO:0097163">
    <property type="term" value="F:sulfur carrier activity"/>
    <property type="evidence" value="ECO:0007669"/>
    <property type="project" value="UniProtKB-UniRule"/>
</dbReference>
<dbReference type="GO" id="GO:0002143">
    <property type="term" value="P:tRNA wobble position uridine thiolation"/>
    <property type="evidence" value="ECO:0007669"/>
    <property type="project" value="InterPro"/>
</dbReference>
<dbReference type="CDD" id="cd03423">
    <property type="entry name" value="SirA"/>
    <property type="match status" value="1"/>
</dbReference>
<dbReference type="Gene3D" id="3.30.110.40">
    <property type="entry name" value="TusA-like domain"/>
    <property type="match status" value="1"/>
</dbReference>
<dbReference type="HAMAP" id="MF_00413">
    <property type="entry name" value="Thiourid_synth_A"/>
    <property type="match status" value="1"/>
</dbReference>
<dbReference type="InterPro" id="IPR022931">
    <property type="entry name" value="Sulphur_carrier_TusA"/>
</dbReference>
<dbReference type="InterPro" id="IPR001455">
    <property type="entry name" value="TusA-like"/>
</dbReference>
<dbReference type="InterPro" id="IPR036868">
    <property type="entry name" value="TusA-like_sf"/>
</dbReference>
<dbReference type="NCBIfam" id="NF001423">
    <property type="entry name" value="PRK00299.1"/>
    <property type="match status" value="1"/>
</dbReference>
<dbReference type="PANTHER" id="PTHR33279:SF2">
    <property type="entry name" value="SULFUR CARRIER PROTEIN TUSA"/>
    <property type="match status" value="1"/>
</dbReference>
<dbReference type="PANTHER" id="PTHR33279">
    <property type="entry name" value="SULFUR CARRIER PROTEIN YEDF-RELATED"/>
    <property type="match status" value="1"/>
</dbReference>
<dbReference type="Pfam" id="PF01206">
    <property type="entry name" value="TusA"/>
    <property type="match status" value="1"/>
</dbReference>
<dbReference type="SUPFAM" id="SSF64307">
    <property type="entry name" value="SirA-like"/>
    <property type="match status" value="1"/>
</dbReference>
<dbReference type="PROSITE" id="PS01148">
    <property type="entry name" value="UPF0033"/>
    <property type="match status" value="1"/>
</dbReference>
<gene>
    <name evidence="1" type="primary">tusA</name>
    <name type="ordered locus">VIBHAR_00453</name>
</gene>
<comment type="function">
    <text evidence="1">Sulfur carrier protein which probably makes part of a sulfur-relay system.</text>
</comment>
<comment type="subcellular location">
    <subcellularLocation>
        <location evidence="1">Cytoplasm</location>
    </subcellularLocation>
</comment>
<comment type="similarity">
    <text evidence="1">Belongs to the sulfur carrier protein TusA family.</text>
</comment>
<evidence type="ECO:0000255" key="1">
    <source>
        <dbReference type="HAMAP-Rule" id="MF_00413"/>
    </source>
</evidence>
<proteinExistence type="inferred from homology"/>
<keyword id="KW-0963">Cytoplasm</keyword>